<protein>
    <recommendedName>
        <fullName evidence="1">Uridylate kinase</fullName>
        <shortName evidence="1">UK</shortName>
        <ecNumber evidence="1">2.7.4.22</ecNumber>
    </recommendedName>
    <alternativeName>
        <fullName evidence="1">Uridine monophosphate kinase</fullName>
        <shortName evidence="1">UMP kinase</shortName>
        <shortName evidence="1">UMPK</shortName>
    </alternativeName>
</protein>
<name>PYRH_RHILO</name>
<dbReference type="EC" id="2.7.4.22" evidence="1"/>
<dbReference type="EMBL" id="BA000012">
    <property type="protein sequence ID" value="BAB48196.1"/>
    <property type="status" value="ALT_INIT"/>
    <property type="molecule type" value="Genomic_DNA"/>
</dbReference>
<dbReference type="SMR" id="Q98MB7"/>
<dbReference type="KEGG" id="mlo:mll0643"/>
<dbReference type="eggNOG" id="COG0528">
    <property type="taxonomic scope" value="Bacteria"/>
</dbReference>
<dbReference type="HOGENOM" id="CLU_033861_0_0_5"/>
<dbReference type="UniPathway" id="UPA00159">
    <property type="reaction ID" value="UER00275"/>
</dbReference>
<dbReference type="Proteomes" id="UP000000552">
    <property type="component" value="Chromosome"/>
</dbReference>
<dbReference type="GO" id="GO:0005829">
    <property type="term" value="C:cytosol"/>
    <property type="evidence" value="ECO:0007669"/>
    <property type="project" value="TreeGrafter"/>
</dbReference>
<dbReference type="GO" id="GO:0005524">
    <property type="term" value="F:ATP binding"/>
    <property type="evidence" value="ECO:0007669"/>
    <property type="project" value="UniProtKB-KW"/>
</dbReference>
<dbReference type="GO" id="GO:0033862">
    <property type="term" value="F:UMP kinase activity"/>
    <property type="evidence" value="ECO:0007669"/>
    <property type="project" value="UniProtKB-EC"/>
</dbReference>
<dbReference type="GO" id="GO:0044210">
    <property type="term" value="P:'de novo' CTP biosynthetic process"/>
    <property type="evidence" value="ECO:0007669"/>
    <property type="project" value="UniProtKB-UniRule"/>
</dbReference>
<dbReference type="GO" id="GO:0006225">
    <property type="term" value="P:UDP biosynthetic process"/>
    <property type="evidence" value="ECO:0007669"/>
    <property type="project" value="TreeGrafter"/>
</dbReference>
<dbReference type="CDD" id="cd04254">
    <property type="entry name" value="AAK_UMPK-PyrH-Ec"/>
    <property type="match status" value="1"/>
</dbReference>
<dbReference type="FunFam" id="3.40.1160.10:FF:000001">
    <property type="entry name" value="Uridylate kinase"/>
    <property type="match status" value="1"/>
</dbReference>
<dbReference type="Gene3D" id="3.40.1160.10">
    <property type="entry name" value="Acetylglutamate kinase-like"/>
    <property type="match status" value="1"/>
</dbReference>
<dbReference type="HAMAP" id="MF_01220_B">
    <property type="entry name" value="PyrH_B"/>
    <property type="match status" value="1"/>
</dbReference>
<dbReference type="InterPro" id="IPR036393">
    <property type="entry name" value="AceGlu_kinase-like_sf"/>
</dbReference>
<dbReference type="InterPro" id="IPR001048">
    <property type="entry name" value="Asp/Glu/Uridylate_kinase"/>
</dbReference>
<dbReference type="InterPro" id="IPR011817">
    <property type="entry name" value="Uridylate_kinase"/>
</dbReference>
<dbReference type="InterPro" id="IPR015963">
    <property type="entry name" value="Uridylate_kinase_bac"/>
</dbReference>
<dbReference type="NCBIfam" id="TIGR02075">
    <property type="entry name" value="pyrH_bact"/>
    <property type="match status" value="1"/>
</dbReference>
<dbReference type="PANTHER" id="PTHR42833">
    <property type="entry name" value="URIDYLATE KINASE"/>
    <property type="match status" value="1"/>
</dbReference>
<dbReference type="PANTHER" id="PTHR42833:SF4">
    <property type="entry name" value="URIDYLATE KINASE PUMPKIN, CHLOROPLASTIC"/>
    <property type="match status" value="1"/>
</dbReference>
<dbReference type="Pfam" id="PF00696">
    <property type="entry name" value="AA_kinase"/>
    <property type="match status" value="1"/>
</dbReference>
<dbReference type="PIRSF" id="PIRSF005650">
    <property type="entry name" value="Uridylate_kin"/>
    <property type="match status" value="1"/>
</dbReference>
<dbReference type="SUPFAM" id="SSF53633">
    <property type="entry name" value="Carbamate kinase-like"/>
    <property type="match status" value="1"/>
</dbReference>
<accession>Q98MB7</accession>
<feature type="chain" id="PRO_0000143874" description="Uridylate kinase">
    <location>
        <begin position="1"/>
        <end position="240"/>
    </location>
</feature>
<feature type="binding site" evidence="1">
    <location>
        <begin position="13"/>
        <end position="16"/>
    </location>
    <ligand>
        <name>ATP</name>
        <dbReference type="ChEBI" id="CHEBI:30616"/>
    </ligand>
</feature>
<feature type="binding site" evidence="1">
    <location>
        <position position="55"/>
    </location>
    <ligand>
        <name>UMP</name>
        <dbReference type="ChEBI" id="CHEBI:57865"/>
    </ligand>
</feature>
<feature type="binding site" evidence="1">
    <location>
        <position position="56"/>
    </location>
    <ligand>
        <name>ATP</name>
        <dbReference type="ChEBI" id="CHEBI:30616"/>
    </ligand>
</feature>
<feature type="binding site" evidence="1">
    <location>
        <position position="60"/>
    </location>
    <ligand>
        <name>ATP</name>
        <dbReference type="ChEBI" id="CHEBI:30616"/>
    </ligand>
</feature>
<feature type="binding site" evidence="1">
    <location>
        <position position="75"/>
    </location>
    <ligand>
        <name>UMP</name>
        <dbReference type="ChEBI" id="CHEBI:57865"/>
    </ligand>
</feature>
<feature type="binding site" evidence="1">
    <location>
        <begin position="136"/>
        <end position="143"/>
    </location>
    <ligand>
        <name>UMP</name>
        <dbReference type="ChEBI" id="CHEBI:57865"/>
    </ligand>
</feature>
<feature type="binding site" evidence="1">
    <location>
        <position position="163"/>
    </location>
    <ligand>
        <name>ATP</name>
        <dbReference type="ChEBI" id="CHEBI:30616"/>
    </ligand>
</feature>
<feature type="binding site" evidence="1">
    <location>
        <position position="164"/>
    </location>
    <ligand>
        <name>ATP</name>
        <dbReference type="ChEBI" id="CHEBI:30616"/>
    </ligand>
</feature>
<feature type="binding site" evidence="1">
    <location>
        <position position="169"/>
    </location>
    <ligand>
        <name>ATP</name>
        <dbReference type="ChEBI" id="CHEBI:30616"/>
    </ligand>
</feature>
<feature type="binding site" evidence="1">
    <location>
        <position position="172"/>
    </location>
    <ligand>
        <name>ATP</name>
        <dbReference type="ChEBI" id="CHEBI:30616"/>
    </ligand>
</feature>
<organism>
    <name type="scientific">Mesorhizobium japonicum (strain LMG 29417 / CECT 9101 / MAFF 303099)</name>
    <name type="common">Mesorhizobium loti (strain MAFF 303099)</name>
    <dbReference type="NCBI Taxonomy" id="266835"/>
    <lineage>
        <taxon>Bacteria</taxon>
        <taxon>Pseudomonadati</taxon>
        <taxon>Pseudomonadota</taxon>
        <taxon>Alphaproteobacteria</taxon>
        <taxon>Hyphomicrobiales</taxon>
        <taxon>Phyllobacteriaceae</taxon>
        <taxon>Mesorhizobium</taxon>
    </lineage>
</organism>
<evidence type="ECO:0000255" key="1">
    <source>
        <dbReference type="HAMAP-Rule" id="MF_01220"/>
    </source>
</evidence>
<evidence type="ECO:0000305" key="2"/>
<sequence length="240" mass="25184">MTVKPLYRRVLLKASGEALMGEQHFGIDVSVVDRIAADIAEARGLGIEVGVVIGGGNIFRGVAVASKGGDRVTGDHMGMLATVINSLALRTSLHKIGVDAVVLSAIAMPELCESFSQRQADAYMNQGRVVIFAGGTGNPFFTTDSAAALRAAEIGADALFKGTQVDGVYSADPKKDPNATRFERISHAEVINRGLSIMDTAAIALARENNIPIIVYSIHEKGGFGDILRGGGRCTVVADD</sequence>
<reference key="1">
    <citation type="journal article" date="2000" name="DNA Res.">
        <title>Complete genome structure of the nitrogen-fixing symbiotic bacterium Mesorhizobium loti.</title>
        <authorList>
            <person name="Kaneko T."/>
            <person name="Nakamura Y."/>
            <person name="Sato S."/>
            <person name="Asamizu E."/>
            <person name="Kato T."/>
            <person name="Sasamoto S."/>
            <person name="Watanabe A."/>
            <person name="Idesawa K."/>
            <person name="Ishikawa A."/>
            <person name="Kawashima K."/>
            <person name="Kimura T."/>
            <person name="Kishida Y."/>
            <person name="Kiyokawa C."/>
            <person name="Kohara M."/>
            <person name="Matsumoto M."/>
            <person name="Matsuno A."/>
            <person name="Mochizuki Y."/>
            <person name="Nakayama S."/>
            <person name="Nakazaki N."/>
            <person name="Shimpo S."/>
            <person name="Sugimoto M."/>
            <person name="Takeuchi C."/>
            <person name="Yamada M."/>
            <person name="Tabata S."/>
        </authorList>
    </citation>
    <scope>NUCLEOTIDE SEQUENCE [LARGE SCALE GENOMIC DNA]</scope>
    <source>
        <strain>LMG 29417 / CECT 9101 / MAFF 303099</strain>
    </source>
</reference>
<keyword id="KW-0067">ATP-binding</keyword>
<keyword id="KW-0963">Cytoplasm</keyword>
<keyword id="KW-0418">Kinase</keyword>
<keyword id="KW-0547">Nucleotide-binding</keyword>
<keyword id="KW-0665">Pyrimidine biosynthesis</keyword>
<keyword id="KW-0808">Transferase</keyword>
<gene>
    <name evidence="1" type="primary">pyrH</name>
    <name type="ordered locus">mll0643</name>
</gene>
<comment type="function">
    <text evidence="1">Catalyzes the reversible phosphorylation of UMP to UDP.</text>
</comment>
<comment type="catalytic activity">
    <reaction evidence="1">
        <text>UMP + ATP = UDP + ADP</text>
        <dbReference type="Rhea" id="RHEA:24400"/>
        <dbReference type="ChEBI" id="CHEBI:30616"/>
        <dbReference type="ChEBI" id="CHEBI:57865"/>
        <dbReference type="ChEBI" id="CHEBI:58223"/>
        <dbReference type="ChEBI" id="CHEBI:456216"/>
        <dbReference type="EC" id="2.7.4.22"/>
    </reaction>
</comment>
<comment type="activity regulation">
    <text evidence="1">Inhibited by UTP.</text>
</comment>
<comment type="pathway">
    <text evidence="1">Pyrimidine metabolism; CTP biosynthesis via de novo pathway; UDP from UMP (UMPK route): step 1/1.</text>
</comment>
<comment type="subunit">
    <text evidence="1">Homohexamer.</text>
</comment>
<comment type="subcellular location">
    <subcellularLocation>
        <location evidence="1">Cytoplasm</location>
    </subcellularLocation>
</comment>
<comment type="similarity">
    <text evidence="1">Belongs to the UMP kinase family.</text>
</comment>
<comment type="sequence caution" evidence="2">
    <conflict type="erroneous initiation">
        <sequence resource="EMBL-CDS" id="BAB48196"/>
    </conflict>
</comment>
<proteinExistence type="inferred from homology"/>